<protein>
    <recommendedName>
        <fullName evidence="1">Glutamate--tRNA ligase</fullName>
        <ecNumber evidence="1">6.1.1.17</ecNumber>
    </recommendedName>
    <alternativeName>
        <fullName evidence="1">Glutamyl-tRNA synthetase</fullName>
        <shortName evidence="1">GluRS</shortName>
    </alternativeName>
</protein>
<organism>
    <name type="scientific">Cenarchaeum symbiosum (strain A)</name>
    <dbReference type="NCBI Taxonomy" id="414004"/>
    <lineage>
        <taxon>Archaea</taxon>
        <taxon>Nitrososphaerota</taxon>
        <taxon>Candidatus Cenarchaeales</taxon>
        <taxon>Candidatus Cenarchaeaceae</taxon>
        <taxon>Candidatus Cenarchaeum</taxon>
    </lineage>
</organism>
<gene>
    <name evidence="1" type="primary">gltX</name>
    <name type="ordered locus">CENSYa_1618</name>
</gene>
<evidence type="ECO:0000255" key="1">
    <source>
        <dbReference type="HAMAP-Rule" id="MF_02076"/>
    </source>
</evidence>
<dbReference type="EC" id="6.1.1.17" evidence="1"/>
<dbReference type="EMBL" id="DP000238">
    <property type="protein sequence ID" value="ABK78237.1"/>
    <property type="molecule type" value="Genomic_DNA"/>
</dbReference>
<dbReference type="SMR" id="A0RY20"/>
<dbReference type="STRING" id="414004.CENSYa_1618"/>
<dbReference type="EnsemblBacteria" id="ABK78237">
    <property type="protein sequence ID" value="ABK78237"/>
    <property type="gene ID" value="CENSYa_1618"/>
</dbReference>
<dbReference type="KEGG" id="csy:CENSYa_1618"/>
<dbReference type="PATRIC" id="fig|414004.10.peg.1480"/>
<dbReference type="HOGENOM" id="CLU_001882_2_3_2"/>
<dbReference type="Proteomes" id="UP000000758">
    <property type="component" value="Chromosome"/>
</dbReference>
<dbReference type="GO" id="GO:0005829">
    <property type="term" value="C:cytosol"/>
    <property type="evidence" value="ECO:0007669"/>
    <property type="project" value="TreeGrafter"/>
</dbReference>
<dbReference type="GO" id="GO:0032991">
    <property type="term" value="C:protein-containing complex"/>
    <property type="evidence" value="ECO:0007669"/>
    <property type="project" value="UniProtKB-ARBA"/>
</dbReference>
<dbReference type="GO" id="GO:0005524">
    <property type="term" value="F:ATP binding"/>
    <property type="evidence" value="ECO:0007669"/>
    <property type="project" value="UniProtKB-UniRule"/>
</dbReference>
<dbReference type="GO" id="GO:0004818">
    <property type="term" value="F:glutamate-tRNA ligase activity"/>
    <property type="evidence" value="ECO:0007669"/>
    <property type="project" value="UniProtKB-UniRule"/>
</dbReference>
<dbReference type="GO" id="GO:0043604">
    <property type="term" value="P:amide biosynthetic process"/>
    <property type="evidence" value="ECO:0007669"/>
    <property type="project" value="TreeGrafter"/>
</dbReference>
<dbReference type="GO" id="GO:0006424">
    <property type="term" value="P:glutamyl-tRNA aminoacylation"/>
    <property type="evidence" value="ECO:0007669"/>
    <property type="project" value="UniProtKB-UniRule"/>
</dbReference>
<dbReference type="Gene3D" id="2.40.240.100">
    <property type="match status" value="1"/>
</dbReference>
<dbReference type="Gene3D" id="3.40.50.620">
    <property type="entry name" value="HUPs"/>
    <property type="match status" value="1"/>
</dbReference>
<dbReference type="Gene3D" id="2.40.240.10">
    <property type="entry name" value="Ribosomal Protein L25, Chain P"/>
    <property type="match status" value="1"/>
</dbReference>
<dbReference type="HAMAP" id="MF_02076">
    <property type="entry name" value="Glu_tRNA_synth_type2"/>
    <property type="match status" value="1"/>
</dbReference>
<dbReference type="InterPro" id="IPR001412">
    <property type="entry name" value="aa-tRNA-synth_I_CS"/>
</dbReference>
<dbReference type="InterPro" id="IPR050132">
    <property type="entry name" value="Gln/Glu-tRNA_Ligase"/>
</dbReference>
<dbReference type="InterPro" id="IPR004526">
    <property type="entry name" value="Glu-tRNA-synth_arc/euk"/>
</dbReference>
<dbReference type="InterPro" id="IPR000924">
    <property type="entry name" value="Glu/Gln-tRNA-synth"/>
</dbReference>
<dbReference type="InterPro" id="IPR020058">
    <property type="entry name" value="Glu/Gln-tRNA-synth_Ib_cat-dom"/>
</dbReference>
<dbReference type="InterPro" id="IPR020059">
    <property type="entry name" value="Glu/Gln-tRNA-synth_Ib_codon-bd"/>
</dbReference>
<dbReference type="InterPro" id="IPR020056">
    <property type="entry name" value="Rbsml_bL25/Gln-tRNA_synth_N"/>
</dbReference>
<dbReference type="InterPro" id="IPR011035">
    <property type="entry name" value="Ribosomal_bL25/Gln-tRNA_synth"/>
</dbReference>
<dbReference type="InterPro" id="IPR014729">
    <property type="entry name" value="Rossmann-like_a/b/a_fold"/>
</dbReference>
<dbReference type="NCBIfam" id="TIGR00463">
    <property type="entry name" value="gltX_arch"/>
    <property type="match status" value="1"/>
</dbReference>
<dbReference type="PANTHER" id="PTHR43097:SF5">
    <property type="entry name" value="GLUTAMATE--TRNA LIGASE"/>
    <property type="match status" value="1"/>
</dbReference>
<dbReference type="PANTHER" id="PTHR43097">
    <property type="entry name" value="GLUTAMINE-TRNA LIGASE"/>
    <property type="match status" value="1"/>
</dbReference>
<dbReference type="Pfam" id="PF00749">
    <property type="entry name" value="tRNA-synt_1c"/>
    <property type="match status" value="1"/>
</dbReference>
<dbReference type="Pfam" id="PF03950">
    <property type="entry name" value="tRNA-synt_1c_C"/>
    <property type="match status" value="1"/>
</dbReference>
<dbReference type="PRINTS" id="PR00987">
    <property type="entry name" value="TRNASYNTHGLU"/>
</dbReference>
<dbReference type="SUPFAM" id="SSF52374">
    <property type="entry name" value="Nucleotidylyl transferase"/>
    <property type="match status" value="1"/>
</dbReference>
<dbReference type="SUPFAM" id="SSF50715">
    <property type="entry name" value="Ribosomal protein L25-like"/>
    <property type="match status" value="1"/>
</dbReference>
<dbReference type="PROSITE" id="PS00178">
    <property type="entry name" value="AA_TRNA_LIGASE_I"/>
    <property type="match status" value="1"/>
</dbReference>
<sequence length="562" mass="62086">MSDIAGEARKIALQNAVSHGGRAREGAVLAGLLGARPELRPKAGELMEEISDIVAGINAMPESKQREELGDVPVERKKQEGQALPPLEGAIKGRVVTRFPPEPNGYPHIGHAKAAIINEEYVTMYGGIKILRMDDTNPGAERMEYYAAIKVGLDWLGIEYDVIKNTSDDMDLLLSKGRELLESGDAYVCTCKRDDMSKNRRAMAPCKCSKKAQEDHMEGWDKMHGKFKPGQAVARFRGDMESQNTVMRDPVLFRIMEERHPLLGDRHRVWPSYDMAVAIEDSIDGVTHAFRSKEYELRNELYGAILGKLDMRAPMVLEFSRLEFEGMPVSKRVIRPLIEDGKIPWYDDPRLPTLEGMKKRGITPGAIRRFVISLGLTKADTLAPFGALEAFNRKEIDGNSTRLFLVGDPRRIDVAGLPGTAELPNHPSGDMGSRKIETGGALYLPGKDAEGLSEGGHIRLMGLGDVRIDSAGRDLAGTYTGDDISAGYPKMQWVPCGDARKIKVVIPRAPIKDGEFDSSSLGILEGMVEPHYLQVGDGQSIQFVRFGYCRKESQHMAVFTHG</sequence>
<proteinExistence type="inferred from homology"/>
<accession>A0RY20</accession>
<keyword id="KW-0030">Aminoacyl-tRNA synthetase</keyword>
<keyword id="KW-0067">ATP-binding</keyword>
<keyword id="KW-0963">Cytoplasm</keyword>
<keyword id="KW-0436">Ligase</keyword>
<keyword id="KW-0547">Nucleotide-binding</keyword>
<keyword id="KW-0648">Protein biosynthesis</keyword>
<keyword id="KW-1185">Reference proteome</keyword>
<comment type="function">
    <text evidence="1">Catalyzes the attachment of glutamate to tRNA(Glu) in a two-step reaction: glutamate is first activated by ATP to form Glu-AMP and then transferred to the acceptor end of tRNA(Glu).</text>
</comment>
<comment type="catalytic activity">
    <reaction evidence="1">
        <text>tRNA(Glu) + L-glutamate + ATP = L-glutamyl-tRNA(Glu) + AMP + diphosphate</text>
        <dbReference type="Rhea" id="RHEA:23540"/>
        <dbReference type="Rhea" id="RHEA-COMP:9663"/>
        <dbReference type="Rhea" id="RHEA-COMP:9680"/>
        <dbReference type="ChEBI" id="CHEBI:29985"/>
        <dbReference type="ChEBI" id="CHEBI:30616"/>
        <dbReference type="ChEBI" id="CHEBI:33019"/>
        <dbReference type="ChEBI" id="CHEBI:78442"/>
        <dbReference type="ChEBI" id="CHEBI:78520"/>
        <dbReference type="ChEBI" id="CHEBI:456215"/>
        <dbReference type="EC" id="6.1.1.17"/>
    </reaction>
</comment>
<comment type="subcellular location">
    <subcellularLocation>
        <location evidence="1">Cytoplasm</location>
    </subcellularLocation>
</comment>
<comment type="similarity">
    <text evidence="1">Belongs to the class-I aminoacyl-tRNA synthetase family. Glutamate--tRNA ligase type 2 subfamily.</text>
</comment>
<reference key="1">
    <citation type="journal article" date="2006" name="Proc. Natl. Acad. Sci. U.S.A.">
        <title>Genomic analysis of the uncultivated marine crenarchaeote Cenarchaeum symbiosum.</title>
        <authorList>
            <person name="Hallam S.J."/>
            <person name="Konstantinidis K.T."/>
            <person name="Putnam N."/>
            <person name="Schleper C."/>
            <person name="Watanabe Y."/>
            <person name="Sugahara J."/>
            <person name="Preston C."/>
            <person name="de la Torre J."/>
            <person name="Richardson P.M."/>
            <person name="DeLong E.F."/>
        </authorList>
    </citation>
    <scope>NUCLEOTIDE SEQUENCE [LARGE SCALE GENOMIC DNA]</scope>
    <source>
        <strain>A</strain>
    </source>
</reference>
<feature type="chain" id="PRO_0000367799" description="Glutamate--tRNA ligase">
    <location>
        <begin position="1"/>
        <end position="562"/>
    </location>
</feature>
<feature type="short sequence motif" description="'HIGH' region" evidence="1">
    <location>
        <begin position="101"/>
        <end position="111"/>
    </location>
</feature>
<name>SYE_CENSY</name>